<name>FABZ_BORPE</name>
<dbReference type="EC" id="4.2.1.59" evidence="1"/>
<dbReference type="EMBL" id="BX640415">
    <property type="protein sequence ID" value="CAE41720.1"/>
    <property type="molecule type" value="Genomic_DNA"/>
</dbReference>
<dbReference type="RefSeq" id="NP_880172.1">
    <property type="nucleotide sequence ID" value="NC_002929.2"/>
</dbReference>
<dbReference type="RefSeq" id="WP_003811776.1">
    <property type="nucleotide sequence ID" value="NZ_CP039022.1"/>
</dbReference>
<dbReference type="SMR" id="Q7VYB9"/>
<dbReference type="STRING" id="257313.BP1430"/>
<dbReference type="PaxDb" id="257313-BP1430"/>
<dbReference type="GeneID" id="69601341"/>
<dbReference type="KEGG" id="bpe:BP1430"/>
<dbReference type="PATRIC" id="fig|257313.5.peg.1533"/>
<dbReference type="eggNOG" id="COG0764">
    <property type="taxonomic scope" value="Bacteria"/>
</dbReference>
<dbReference type="HOGENOM" id="CLU_078912_1_0_4"/>
<dbReference type="Proteomes" id="UP000002676">
    <property type="component" value="Chromosome"/>
</dbReference>
<dbReference type="GO" id="GO:0005737">
    <property type="term" value="C:cytoplasm"/>
    <property type="evidence" value="ECO:0007669"/>
    <property type="project" value="UniProtKB-SubCell"/>
</dbReference>
<dbReference type="GO" id="GO:0016020">
    <property type="term" value="C:membrane"/>
    <property type="evidence" value="ECO:0007669"/>
    <property type="project" value="GOC"/>
</dbReference>
<dbReference type="GO" id="GO:0019171">
    <property type="term" value="F:(3R)-hydroxyacyl-[acyl-carrier-protein] dehydratase activity"/>
    <property type="evidence" value="ECO:0007669"/>
    <property type="project" value="UniProtKB-EC"/>
</dbReference>
<dbReference type="GO" id="GO:0006633">
    <property type="term" value="P:fatty acid biosynthetic process"/>
    <property type="evidence" value="ECO:0007669"/>
    <property type="project" value="UniProtKB-UniRule"/>
</dbReference>
<dbReference type="GO" id="GO:0009245">
    <property type="term" value="P:lipid A biosynthetic process"/>
    <property type="evidence" value="ECO:0007669"/>
    <property type="project" value="UniProtKB-UniRule"/>
</dbReference>
<dbReference type="CDD" id="cd01288">
    <property type="entry name" value="FabZ"/>
    <property type="match status" value="1"/>
</dbReference>
<dbReference type="FunFam" id="3.10.129.10:FF:000001">
    <property type="entry name" value="3-hydroxyacyl-[acyl-carrier-protein] dehydratase FabZ"/>
    <property type="match status" value="1"/>
</dbReference>
<dbReference type="Gene3D" id="3.10.129.10">
    <property type="entry name" value="Hotdog Thioesterase"/>
    <property type="match status" value="1"/>
</dbReference>
<dbReference type="HAMAP" id="MF_00406">
    <property type="entry name" value="FabZ"/>
    <property type="match status" value="1"/>
</dbReference>
<dbReference type="InterPro" id="IPR013114">
    <property type="entry name" value="FabA_FabZ"/>
</dbReference>
<dbReference type="InterPro" id="IPR010084">
    <property type="entry name" value="FabZ"/>
</dbReference>
<dbReference type="InterPro" id="IPR029069">
    <property type="entry name" value="HotDog_dom_sf"/>
</dbReference>
<dbReference type="NCBIfam" id="TIGR01750">
    <property type="entry name" value="fabZ"/>
    <property type="match status" value="1"/>
</dbReference>
<dbReference type="NCBIfam" id="NF000582">
    <property type="entry name" value="PRK00006.1"/>
    <property type="match status" value="1"/>
</dbReference>
<dbReference type="PANTHER" id="PTHR30272">
    <property type="entry name" value="3-HYDROXYACYL-[ACYL-CARRIER-PROTEIN] DEHYDRATASE"/>
    <property type="match status" value="1"/>
</dbReference>
<dbReference type="PANTHER" id="PTHR30272:SF1">
    <property type="entry name" value="3-HYDROXYACYL-[ACYL-CARRIER-PROTEIN] DEHYDRATASE"/>
    <property type="match status" value="1"/>
</dbReference>
<dbReference type="Pfam" id="PF07977">
    <property type="entry name" value="FabA"/>
    <property type="match status" value="1"/>
</dbReference>
<dbReference type="SUPFAM" id="SSF54637">
    <property type="entry name" value="Thioesterase/thiol ester dehydrase-isomerase"/>
    <property type="match status" value="1"/>
</dbReference>
<comment type="function">
    <text evidence="1">Involved in unsaturated fatty acids biosynthesis. Catalyzes the dehydration of short chain beta-hydroxyacyl-ACPs and long chain saturated and unsaturated beta-hydroxyacyl-ACPs.</text>
</comment>
<comment type="catalytic activity">
    <reaction evidence="1">
        <text>a (3R)-hydroxyacyl-[ACP] = a (2E)-enoyl-[ACP] + H2O</text>
        <dbReference type="Rhea" id="RHEA:13097"/>
        <dbReference type="Rhea" id="RHEA-COMP:9925"/>
        <dbReference type="Rhea" id="RHEA-COMP:9945"/>
        <dbReference type="ChEBI" id="CHEBI:15377"/>
        <dbReference type="ChEBI" id="CHEBI:78784"/>
        <dbReference type="ChEBI" id="CHEBI:78827"/>
        <dbReference type="EC" id="4.2.1.59"/>
    </reaction>
</comment>
<comment type="subcellular location">
    <subcellularLocation>
        <location evidence="1">Cytoplasm</location>
    </subcellularLocation>
</comment>
<comment type="similarity">
    <text evidence="1">Belongs to the thioester dehydratase family. FabZ subfamily.</text>
</comment>
<organism>
    <name type="scientific">Bordetella pertussis (strain Tohama I / ATCC BAA-589 / NCTC 13251)</name>
    <dbReference type="NCBI Taxonomy" id="257313"/>
    <lineage>
        <taxon>Bacteria</taxon>
        <taxon>Pseudomonadati</taxon>
        <taxon>Pseudomonadota</taxon>
        <taxon>Betaproteobacteria</taxon>
        <taxon>Burkholderiales</taxon>
        <taxon>Alcaligenaceae</taxon>
        <taxon>Bordetella</taxon>
    </lineage>
</organism>
<keyword id="KW-0963">Cytoplasm</keyword>
<keyword id="KW-0441">Lipid A biosynthesis</keyword>
<keyword id="KW-0444">Lipid biosynthesis</keyword>
<keyword id="KW-0443">Lipid metabolism</keyword>
<keyword id="KW-0456">Lyase</keyword>
<keyword id="KW-1185">Reference proteome</keyword>
<accession>Q7VYB9</accession>
<proteinExistence type="inferred from homology"/>
<protein>
    <recommendedName>
        <fullName evidence="1">3-hydroxyacyl-[acyl-carrier-protein] dehydratase FabZ</fullName>
        <ecNumber evidence="1">4.2.1.59</ecNumber>
    </recommendedName>
    <alternativeName>
        <fullName evidence="1">(3R)-hydroxymyristoyl-[acyl-carrier-protein] dehydratase</fullName>
        <shortName evidence="1">(3R)-hydroxymyristoyl-ACP dehydrase</shortName>
    </alternativeName>
    <alternativeName>
        <fullName evidence="1">Beta-hydroxyacyl-ACP dehydratase</fullName>
    </alternativeName>
</protein>
<sequence length="151" mass="16754">MELDIKGIMDRLPHRYPMLLIDRVLEMVPGKSIVAIKNVSINEPFFTGHFPHHPVMPGVLIVEAMAQASALFSFTDENGGLKCDGAKTAYYLVGIDGARFRKPVVPGDQLRLEVEAERLSRTICKYQGRALVDGQLVAEAKLMCAIRSLEE</sequence>
<feature type="chain" id="PRO_0000091647" description="3-hydroxyacyl-[acyl-carrier-protein] dehydratase FabZ">
    <location>
        <begin position="1"/>
        <end position="151"/>
    </location>
</feature>
<feature type="active site" evidence="1">
    <location>
        <position position="49"/>
    </location>
</feature>
<reference key="1">
    <citation type="journal article" date="2003" name="Nat. Genet.">
        <title>Comparative analysis of the genome sequences of Bordetella pertussis, Bordetella parapertussis and Bordetella bronchiseptica.</title>
        <authorList>
            <person name="Parkhill J."/>
            <person name="Sebaihia M."/>
            <person name="Preston A."/>
            <person name="Murphy L.D."/>
            <person name="Thomson N.R."/>
            <person name="Harris D.E."/>
            <person name="Holden M.T.G."/>
            <person name="Churcher C.M."/>
            <person name="Bentley S.D."/>
            <person name="Mungall K.L."/>
            <person name="Cerdeno-Tarraga A.-M."/>
            <person name="Temple L."/>
            <person name="James K.D."/>
            <person name="Harris B."/>
            <person name="Quail M.A."/>
            <person name="Achtman M."/>
            <person name="Atkin R."/>
            <person name="Baker S."/>
            <person name="Basham D."/>
            <person name="Bason N."/>
            <person name="Cherevach I."/>
            <person name="Chillingworth T."/>
            <person name="Collins M."/>
            <person name="Cronin A."/>
            <person name="Davis P."/>
            <person name="Doggett J."/>
            <person name="Feltwell T."/>
            <person name="Goble A."/>
            <person name="Hamlin N."/>
            <person name="Hauser H."/>
            <person name="Holroyd S."/>
            <person name="Jagels K."/>
            <person name="Leather S."/>
            <person name="Moule S."/>
            <person name="Norberczak H."/>
            <person name="O'Neil S."/>
            <person name="Ormond D."/>
            <person name="Price C."/>
            <person name="Rabbinowitsch E."/>
            <person name="Rutter S."/>
            <person name="Sanders M."/>
            <person name="Saunders D."/>
            <person name="Seeger K."/>
            <person name="Sharp S."/>
            <person name="Simmonds M."/>
            <person name="Skelton J."/>
            <person name="Squares R."/>
            <person name="Squares S."/>
            <person name="Stevens K."/>
            <person name="Unwin L."/>
            <person name="Whitehead S."/>
            <person name="Barrell B.G."/>
            <person name="Maskell D.J."/>
        </authorList>
    </citation>
    <scope>NUCLEOTIDE SEQUENCE [LARGE SCALE GENOMIC DNA]</scope>
    <source>
        <strain>Tohama I / ATCC BAA-589 / NCTC 13251</strain>
    </source>
</reference>
<evidence type="ECO:0000255" key="1">
    <source>
        <dbReference type="HAMAP-Rule" id="MF_00406"/>
    </source>
</evidence>
<gene>
    <name evidence="1" type="primary">fabZ</name>
    <name type="ordered locus">BP1430</name>
</gene>